<dbReference type="EC" id="1.6.2.4" evidence="2"/>
<dbReference type="EMBL" id="D00101">
    <property type="protein sequence ID" value="BAA00063.1"/>
    <property type="molecule type" value="mRNA"/>
</dbReference>
<dbReference type="EMBL" id="X04610">
    <property type="protein sequence ID" value="CAA28279.1"/>
    <property type="molecule type" value="mRNA"/>
</dbReference>
<dbReference type="PIR" id="A25505">
    <property type="entry name" value="A25505"/>
</dbReference>
<dbReference type="RefSeq" id="NP_001153762.1">
    <property type="nucleotide sequence ID" value="NM_001160290.1"/>
</dbReference>
<dbReference type="SMR" id="P00389"/>
<dbReference type="FunCoup" id="P00389">
    <property type="interactions" value="2145"/>
</dbReference>
<dbReference type="STRING" id="9986.ENSOCUP00000040187"/>
<dbReference type="PaxDb" id="9986-ENSOCUP00000020921"/>
<dbReference type="GeneID" id="100301554"/>
<dbReference type="KEGG" id="ocu:100301554"/>
<dbReference type="CTD" id="5447"/>
<dbReference type="eggNOG" id="KOG1158">
    <property type="taxonomic scope" value="Eukaryota"/>
</dbReference>
<dbReference type="InParanoid" id="P00389"/>
<dbReference type="OrthoDB" id="1856718at2759"/>
<dbReference type="BioCyc" id="MetaCyc:MONOMER-14302"/>
<dbReference type="Proteomes" id="UP000001811">
    <property type="component" value="Unplaced"/>
</dbReference>
<dbReference type="GO" id="GO:0005829">
    <property type="term" value="C:cytosol"/>
    <property type="evidence" value="ECO:0007669"/>
    <property type="project" value="TreeGrafter"/>
</dbReference>
<dbReference type="GO" id="GO:0005789">
    <property type="term" value="C:endoplasmic reticulum membrane"/>
    <property type="evidence" value="ECO:0007669"/>
    <property type="project" value="UniProtKB-SubCell"/>
</dbReference>
<dbReference type="GO" id="GO:0050660">
    <property type="term" value="F:flavin adenine dinucleotide binding"/>
    <property type="evidence" value="ECO:0007669"/>
    <property type="project" value="UniProtKB-UniRule"/>
</dbReference>
<dbReference type="GO" id="GO:0010181">
    <property type="term" value="F:FMN binding"/>
    <property type="evidence" value="ECO:0007669"/>
    <property type="project" value="UniProtKB-UniRule"/>
</dbReference>
<dbReference type="GO" id="GO:0050661">
    <property type="term" value="F:NADP binding"/>
    <property type="evidence" value="ECO:0007669"/>
    <property type="project" value="UniProtKB-UniRule"/>
</dbReference>
<dbReference type="GO" id="GO:0003958">
    <property type="term" value="F:NADPH-hemoprotein reductase activity"/>
    <property type="evidence" value="ECO:0007669"/>
    <property type="project" value="UniProtKB-UniRule"/>
</dbReference>
<dbReference type="GO" id="GO:0009725">
    <property type="term" value="P:response to hormone"/>
    <property type="evidence" value="ECO:0007669"/>
    <property type="project" value="TreeGrafter"/>
</dbReference>
<dbReference type="CDD" id="cd06204">
    <property type="entry name" value="CYPOR"/>
    <property type="match status" value="1"/>
</dbReference>
<dbReference type="FunFam" id="1.20.990.10:FF:000001">
    <property type="entry name" value="NADPH--cytochrome P450 reductase"/>
    <property type="match status" value="1"/>
</dbReference>
<dbReference type="FunFam" id="3.40.50.360:FF:000009">
    <property type="entry name" value="NADPH--cytochrome P450 reductase"/>
    <property type="match status" value="1"/>
</dbReference>
<dbReference type="FunFam" id="3.40.50.80:FF:000001">
    <property type="entry name" value="NADPH--cytochrome P450 reductase 1"/>
    <property type="match status" value="1"/>
</dbReference>
<dbReference type="Gene3D" id="3.40.50.360">
    <property type="match status" value="1"/>
</dbReference>
<dbReference type="Gene3D" id="1.20.990.10">
    <property type="entry name" value="NADPH-cytochrome p450 Reductase, Chain A, domain 3"/>
    <property type="match status" value="1"/>
</dbReference>
<dbReference type="Gene3D" id="3.40.50.80">
    <property type="entry name" value="Nucleotide-binding domain of ferredoxin-NADP reductase (FNR) module"/>
    <property type="match status" value="1"/>
</dbReference>
<dbReference type="Gene3D" id="2.40.30.10">
    <property type="entry name" value="Translation factors"/>
    <property type="match status" value="1"/>
</dbReference>
<dbReference type="HAMAP" id="MF_03212">
    <property type="entry name" value="NCPR"/>
    <property type="match status" value="1"/>
</dbReference>
<dbReference type="InterPro" id="IPR003097">
    <property type="entry name" value="CysJ-like_FAD-binding"/>
</dbReference>
<dbReference type="InterPro" id="IPR017927">
    <property type="entry name" value="FAD-bd_FR_type"/>
</dbReference>
<dbReference type="InterPro" id="IPR001094">
    <property type="entry name" value="Flavdoxin-like"/>
</dbReference>
<dbReference type="InterPro" id="IPR008254">
    <property type="entry name" value="Flavodoxin/NO_synth"/>
</dbReference>
<dbReference type="InterPro" id="IPR001709">
    <property type="entry name" value="Flavoprot_Pyr_Nucl_cyt_Rdtase"/>
</dbReference>
<dbReference type="InterPro" id="IPR029039">
    <property type="entry name" value="Flavoprotein-like_sf"/>
</dbReference>
<dbReference type="InterPro" id="IPR039261">
    <property type="entry name" value="FNR_nucleotide-bd"/>
</dbReference>
<dbReference type="InterPro" id="IPR023173">
    <property type="entry name" value="NADPH_Cyt_P450_Rdtase_alpha"/>
</dbReference>
<dbReference type="InterPro" id="IPR001433">
    <property type="entry name" value="OxRdtase_FAD/NAD-bd"/>
</dbReference>
<dbReference type="InterPro" id="IPR023208">
    <property type="entry name" value="P450R"/>
</dbReference>
<dbReference type="InterPro" id="IPR017938">
    <property type="entry name" value="Riboflavin_synthase-like_b-brl"/>
</dbReference>
<dbReference type="PANTHER" id="PTHR19384:SF17">
    <property type="entry name" value="NADPH--CYTOCHROME P450 REDUCTASE"/>
    <property type="match status" value="1"/>
</dbReference>
<dbReference type="PANTHER" id="PTHR19384">
    <property type="entry name" value="NITRIC OXIDE SYNTHASE-RELATED"/>
    <property type="match status" value="1"/>
</dbReference>
<dbReference type="Pfam" id="PF00667">
    <property type="entry name" value="FAD_binding_1"/>
    <property type="match status" value="1"/>
</dbReference>
<dbReference type="Pfam" id="PF00258">
    <property type="entry name" value="Flavodoxin_1"/>
    <property type="match status" value="1"/>
</dbReference>
<dbReference type="Pfam" id="PF00175">
    <property type="entry name" value="NAD_binding_1"/>
    <property type="match status" value="1"/>
</dbReference>
<dbReference type="PIRSF" id="PIRSF000208">
    <property type="entry name" value="P450R"/>
    <property type="match status" value="1"/>
</dbReference>
<dbReference type="PRINTS" id="PR00369">
    <property type="entry name" value="FLAVODOXIN"/>
</dbReference>
<dbReference type="PRINTS" id="PR00371">
    <property type="entry name" value="FPNCR"/>
</dbReference>
<dbReference type="SUPFAM" id="SSF52343">
    <property type="entry name" value="Ferredoxin reductase-like, C-terminal NADP-linked domain"/>
    <property type="match status" value="1"/>
</dbReference>
<dbReference type="SUPFAM" id="SSF52218">
    <property type="entry name" value="Flavoproteins"/>
    <property type="match status" value="1"/>
</dbReference>
<dbReference type="SUPFAM" id="SSF63380">
    <property type="entry name" value="Riboflavin synthase domain-like"/>
    <property type="match status" value="1"/>
</dbReference>
<dbReference type="PROSITE" id="PS51384">
    <property type="entry name" value="FAD_FR"/>
    <property type="match status" value="1"/>
</dbReference>
<dbReference type="PROSITE" id="PS50902">
    <property type="entry name" value="FLAVODOXIN_LIKE"/>
    <property type="match status" value="1"/>
</dbReference>
<comment type="function">
    <text evidence="2">This enzyme is required for electron transfer from NADP to cytochrome P450 in microsomes. It can also provide electron transfer to heme oxygenase and cytochrome B5.</text>
</comment>
<comment type="catalytic activity">
    <reaction evidence="2">
        <text>2 oxidized [cytochrome P450] + NADPH = 2 reduced [cytochrome P450] + NADP(+) + H(+)</text>
        <dbReference type="Rhea" id="RHEA:24040"/>
        <dbReference type="Rhea" id="RHEA-COMP:14627"/>
        <dbReference type="Rhea" id="RHEA-COMP:14628"/>
        <dbReference type="ChEBI" id="CHEBI:15378"/>
        <dbReference type="ChEBI" id="CHEBI:55376"/>
        <dbReference type="ChEBI" id="CHEBI:57783"/>
        <dbReference type="ChEBI" id="CHEBI:58349"/>
        <dbReference type="ChEBI" id="CHEBI:60344"/>
        <dbReference type="EC" id="1.6.2.4"/>
    </reaction>
</comment>
<comment type="cofactor">
    <cofactor evidence="2">
        <name>FAD</name>
        <dbReference type="ChEBI" id="CHEBI:57692"/>
    </cofactor>
    <text evidence="2">Binds 1 FAD per monomer.</text>
</comment>
<comment type="cofactor">
    <cofactor evidence="2">
        <name>FMN</name>
        <dbReference type="ChEBI" id="CHEBI:58210"/>
    </cofactor>
    <text evidence="2">Binds 1 FMN per monomer.</text>
</comment>
<comment type="subcellular location">
    <subcellularLocation>
        <location evidence="2">Endoplasmic reticulum membrane</location>
        <topology evidence="2">Single-pass membrane protein</topology>
        <orientation evidence="2">Cytoplasmic side</orientation>
    </subcellularLocation>
</comment>
<comment type="similarity">
    <text evidence="2">Belongs to the NADPH--cytochrome P450 reductase family.</text>
</comment>
<comment type="similarity">
    <text evidence="2">In the N-terminal section; belongs to the flavodoxin family.</text>
</comment>
<comment type="similarity">
    <text evidence="2">In the C-terminal section; belongs to the flavoprotein pyridine nucleotide cytochrome reductase family.</text>
</comment>
<reference key="1">
    <citation type="journal article" date="1986" name="J. Biochem.">
        <title>Molecular cloning and sequence analysis of full-length cDNA for rabbit liver NADPH-cytochrome P-450 reductase mRNA.</title>
        <authorList>
            <person name="Katagiri M."/>
            <person name="Murakami H."/>
            <person name="Yabusaki Y."/>
            <person name="Sugiyama T."/>
            <person name="Okamoto M."/>
            <person name="Yamano T."/>
            <person name="Ohkawa H."/>
        </authorList>
    </citation>
    <scope>NUCLEOTIDE SEQUENCE [MRNA]</scope>
    <source>
        <tissue>Liver</tissue>
    </source>
</reference>
<reference key="2">
    <citation type="journal article" date="1982" name="J. Biol. Chem.">
        <title>Structural features of liver microsomal NADPH-cytochrome P-450 reductase. Hydrophobic domain, hydrophilic domain, and connecting region.</title>
        <authorList>
            <person name="Black S.D."/>
            <person name="Coon M.J."/>
        </authorList>
    </citation>
    <scope>PROTEIN SEQUENCE OF 12-81</scope>
    <source>
        <tissue>Liver</tissue>
    </source>
</reference>
<organism>
    <name type="scientific">Oryctolagus cuniculus</name>
    <name type="common">Rabbit</name>
    <dbReference type="NCBI Taxonomy" id="9986"/>
    <lineage>
        <taxon>Eukaryota</taxon>
        <taxon>Metazoa</taxon>
        <taxon>Chordata</taxon>
        <taxon>Craniata</taxon>
        <taxon>Vertebrata</taxon>
        <taxon>Euteleostomi</taxon>
        <taxon>Mammalia</taxon>
        <taxon>Eutheria</taxon>
        <taxon>Euarchontoglires</taxon>
        <taxon>Glires</taxon>
        <taxon>Lagomorpha</taxon>
        <taxon>Leporidae</taxon>
        <taxon>Oryctolagus</taxon>
    </lineage>
</organism>
<keyword id="KW-0903">Direct protein sequencing</keyword>
<keyword id="KW-0256">Endoplasmic reticulum</keyword>
<keyword id="KW-0274">FAD</keyword>
<keyword id="KW-0285">Flavoprotein</keyword>
<keyword id="KW-0288">FMN</keyword>
<keyword id="KW-0472">Membrane</keyword>
<keyword id="KW-0521">NADP</keyword>
<keyword id="KW-0560">Oxidoreductase</keyword>
<keyword id="KW-0597">Phosphoprotein</keyword>
<keyword id="KW-1185">Reference proteome</keyword>
<keyword id="KW-0812">Transmembrane</keyword>
<keyword id="KW-1133">Transmembrane helix</keyword>
<accession>P00389</accession>
<protein>
    <recommendedName>
        <fullName evidence="2">NADPH--cytochrome P450 reductase</fullName>
        <shortName evidence="2">CPR</shortName>
        <shortName evidence="2">P450R</shortName>
        <ecNumber evidence="2">1.6.2.4</ecNumber>
    </recommendedName>
</protein>
<name>NCPR_RABIT</name>
<proteinExistence type="evidence at protein level"/>
<gene>
    <name evidence="2" type="primary">POR</name>
</gene>
<evidence type="ECO:0000250" key="1">
    <source>
        <dbReference type="UniProtKB" id="P16435"/>
    </source>
</evidence>
<evidence type="ECO:0000255" key="2">
    <source>
        <dbReference type="HAMAP-Rule" id="MF_03212"/>
    </source>
</evidence>
<evidence type="ECO:0000305" key="3"/>
<feature type="chain" id="PRO_0000167599" description="NADPH--cytochrome P450 reductase">
    <location>
        <begin position="1"/>
        <end position="679"/>
    </location>
</feature>
<feature type="topological domain" description="Lumenal" evidence="2">
    <location>
        <begin position="1"/>
        <end position="21"/>
    </location>
</feature>
<feature type="transmembrane region" description="Helical" evidence="2">
    <location>
        <begin position="22"/>
        <end position="42"/>
    </location>
</feature>
<feature type="topological domain" description="Cytoplasmic" evidence="2">
    <location>
        <begin position="43"/>
        <end position="679"/>
    </location>
</feature>
<feature type="domain" description="Flavodoxin-like" evidence="2">
    <location>
        <begin position="81"/>
        <end position="225"/>
    </location>
</feature>
<feature type="domain" description="FAD-binding FR-type" evidence="2">
    <location>
        <begin position="280"/>
        <end position="522"/>
    </location>
</feature>
<feature type="binding site" evidence="2">
    <location>
        <begin position="87"/>
        <end position="92"/>
    </location>
    <ligand>
        <name>FMN</name>
        <dbReference type="ChEBI" id="CHEBI:58210"/>
    </ligand>
</feature>
<feature type="binding site" evidence="2">
    <location>
        <begin position="139"/>
        <end position="142"/>
    </location>
    <ligand>
        <name>FMN</name>
        <dbReference type="ChEBI" id="CHEBI:58210"/>
    </ligand>
</feature>
<feature type="binding site" evidence="2">
    <location>
        <begin position="174"/>
        <end position="183"/>
    </location>
    <ligand>
        <name>FMN</name>
        <dbReference type="ChEBI" id="CHEBI:58210"/>
    </ligand>
</feature>
<feature type="binding site" evidence="2">
    <location>
        <position position="209"/>
    </location>
    <ligand>
        <name>FMN</name>
        <dbReference type="ChEBI" id="CHEBI:58210"/>
    </ligand>
</feature>
<feature type="binding site" evidence="2">
    <location>
        <position position="299"/>
    </location>
    <ligand>
        <name>NADP(+)</name>
        <dbReference type="ChEBI" id="CHEBI:58349"/>
    </ligand>
</feature>
<feature type="binding site" evidence="2">
    <location>
        <position position="425"/>
    </location>
    <ligand>
        <name>FAD</name>
        <dbReference type="ChEBI" id="CHEBI:57692"/>
    </ligand>
</feature>
<feature type="binding site" evidence="2">
    <location>
        <begin position="455"/>
        <end position="458"/>
    </location>
    <ligand>
        <name>FAD</name>
        <dbReference type="ChEBI" id="CHEBI:57692"/>
    </ligand>
</feature>
<feature type="binding site" evidence="2">
    <location>
        <begin position="473"/>
        <end position="475"/>
    </location>
    <ligand>
        <name>FAD</name>
        <dbReference type="ChEBI" id="CHEBI:57692"/>
    </ligand>
</feature>
<feature type="binding site" evidence="2">
    <location>
        <position position="479"/>
    </location>
    <ligand>
        <name>FAD</name>
        <dbReference type="ChEBI" id="CHEBI:57692"/>
    </ligand>
</feature>
<feature type="binding site" evidence="2">
    <location>
        <begin position="489"/>
        <end position="492"/>
    </location>
    <ligand>
        <name>FAD</name>
        <dbReference type="ChEBI" id="CHEBI:57692"/>
    </ligand>
</feature>
<feature type="binding site" evidence="2">
    <location>
        <position position="536"/>
    </location>
    <ligand>
        <name>NADP(+)</name>
        <dbReference type="ChEBI" id="CHEBI:58349"/>
    </ligand>
</feature>
<feature type="binding site" evidence="2">
    <location>
        <begin position="597"/>
        <end position="598"/>
    </location>
    <ligand>
        <name>NADP(+)</name>
        <dbReference type="ChEBI" id="CHEBI:58349"/>
    </ligand>
</feature>
<feature type="binding site" evidence="2">
    <location>
        <begin position="603"/>
        <end position="607"/>
    </location>
    <ligand>
        <name>NADP(+)</name>
        <dbReference type="ChEBI" id="CHEBI:58349"/>
    </ligand>
</feature>
<feature type="binding site" evidence="2">
    <location>
        <position position="640"/>
    </location>
    <ligand>
        <name>NADP(+)</name>
        <dbReference type="ChEBI" id="CHEBI:58349"/>
    </ligand>
</feature>
<feature type="binding site" evidence="2">
    <location>
        <position position="678"/>
    </location>
    <ligand>
        <name>FAD</name>
        <dbReference type="ChEBI" id="CHEBI:57692"/>
    </ligand>
</feature>
<feature type="modified residue" description="Phosphoserine" evidence="1">
    <location>
        <position position="64"/>
    </location>
</feature>
<feature type="sequence conflict" description="In Ref. 2; AA sequence." evidence="3" ref="2">
    <original>YW</original>
    <variation>NY</variation>
    <location>
        <begin position="40"/>
        <end position="41"/>
    </location>
</feature>
<feature type="sequence conflict" description="In Ref. 2; AA sequence." evidence="3" ref="2">
    <original>E</original>
    <variation>N</variation>
    <location>
        <position position="53"/>
    </location>
</feature>
<sequence length="679" mass="76588">MADSHGDTGATMPEAAAQEASVFSMTDVVLFSLIVGLITYWFLFRKKKEEVPEFTKIQAPTSSSVKESSFVEKMKKTGRNIVVFYGSQTGTAEEFANRLSKDAHRYGMRGMAADPEEYDLADLSSLPEINNALAVFCMATYGEGDPTDNAQDFYDWLQETDVDLSGVKYAVFGLGNKTYEHFNAMGKYVDQRLEQLGAQRIFELGMGDDDANLEEDFITWREQFWPAVCEHFGVEATGEESSIRQYELVLHTDIDVAKVYQGEMGRLKSYENQKPPFDAKNPFLATVTTNRKLNQGTERHLMHLELDISDSKIRYESGDHVAVYPANDSALVNQLGEILGADLDVVMSLNNLDEESNKKHPFPCPTSYRTALTYYLDITNPPRTNVLYELAQYAADPAEQEQLRKMASSSGEGKELYLSWVVEARRHILAILQDYPSLRPPIDHLCELLPRLQARYYSIASSSKVHPNSVHICAVAVEYETKAGRLNKGVATSWLRAKEPAGENGGRALVPMFVRKSQFRLPFKATTPVIMVGPGTGVAPFIGFIQERAWLRQQGKEVGETLLYYGCRRAAEDYLYREELAGFQKDGTLSQLNVAFSREQAQKVYVQHLLRRDKEHLWRLIHEGGAHIYVCGDARNMARDVQNTFYDIVAELGAMEHAQAVDYVKKLMTKGRYSLDVWS</sequence>